<feature type="chain" id="PRO_0000245271" description="Putative uncharacterized protein YOL014W">
    <location>
        <begin position="1"/>
        <end position="124"/>
    </location>
</feature>
<name>YO014_YEAST</name>
<keyword id="KW-1185">Reference proteome</keyword>
<sequence length="124" mass="13917">MRPHHFFCGNMGVMYTAMSGYETEDAQAYWACGRAYESAFATLTKKVPGTTFSADMPTSTWHGVLDCGYSSSINVAENKSSPIDYWNCGRTYARNYALSDALSLKPTNMLQYFLLVLFFICIIL</sequence>
<gene>
    <name type="ordered locus">YOL014W</name>
</gene>
<reference key="1">
    <citation type="journal article" date="1997" name="Nature">
        <title>The nucleotide sequence of Saccharomyces cerevisiae chromosome XV.</title>
        <authorList>
            <person name="Dujon B."/>
            <person name="Albermann K."/>
            <person name="Aldea M."/>
            <person name="Alexandraki D."/>
            <person name="Ansorge W."/>
            <person name="Arino J."/>
            <person name="Benes V."/>
            <person name="Bohn C."/>
            <person name="Bolotin-Fukuhara M."/>
            <person name="Bordonne R."/>
            <person name="Boyer J."/>
            <person name="Camasses A."/>
            <person name="Casamayor A."/>
            <person name="Casas C."/>
            <person name="Cheret G."/>
            <person name="Cziepluch C."/>
            <person name="Daignan-Fornier B."/>
            <person name="Dang V.-D."/>
            <person name="de Haan M."/>
            <person name="Delius H."/>
            <person name="Durand P."/>
            <person name="Fairhead C."/>
            <person name="Feldmann H."/>
            <person name="Gaillon L."/>
            <person name="Galisson F."/>
            <person name="Gamo F.-J."/>
            <person name="Gancedo C."/>
            <person name="Goffeau A."/>
            <person name="Goulding S.E."/>
            <person name="Grivell L.A."/>
            <person name="Habbig B."/>
            <person name="Hand N.J."/>
            <person name="Hani J."/>
            <person name="Hattenhorst U."/>
            <person name="Hebling U."/>
            <person name="Hernando Y."/>
            <person name="Herrero E."/>
            <person name="Heumann K."/>
            <person name="Hiesel R."/>
            <person name="Hilger F."/>
            <person name="Hofmann B."/>
            <person name="Hollenberg C.P."/>
            <person name="Hughes B."/>
            <person name="Jauniaux J.-C."/>
            <person name="Kalogeropoulos A."/>
            <person name="Katsoulou C."/>
            <person name="Kordes E."/>
            <person name="Lafuente M.J."/>
            <person name="Landt O."/>
            <person name="Louis E.J."/>
            <person name="Maarse A.C."/>
            <person name="Madania A."/>
            <person name="Mannhaupt G."/>
            <person name="Marck C."/>
            <person name="Martin R.P."/>
            <person name="Mewes H.-W."/>
            <person name="Michaux G."/>
            <person name="Paces V."/>
            <person name="Parle-McDermott A.G."/>
            <person name="Pearson B.M."/>
            <person name="Perrin A."/>
            <person name="Pettersson B."/>
            <person name="Poch O."/>
            <person name="Pohl T.M."/>
            <person name="Poirey R."/>
            <person name="Portetelle D."/>
            <person name="Pujol A."/>
            <person name="Purnelle B."/>
            <person name="Ramezani Rad M."/>
            <person name="Rechmann S."/>
            <person name="Schwager C."/>
            <person name="Schweizer M."/>
            <person name="Sor F."/>
            <person name="Sterky F."/>
            <person name="Tarassov I.A."/>
            <person name="Teodoru C."/>
            <person name="Tettelin H."/>
            <person name="Thierry A."/>
            <person name="Tobiasch E."/>
            <person name="Tzermia M."/>
            <person name="Uhlen M."/>
            <person name="Unseld M."/>
            <person name="Valens M."/>
            <person name="Vandenbol M."/>
            <person name="Vetter I."/>
            <person name="Vlcek C."/>
            <person name="Voet M."/>
            <person name="Volckaert G."/>
            <person name="Voss H."/>
            <person name="Wambutt R."/>
            <person name="Wedler H."/>
            <person name="Wiemann S."/>
            <person name="Winsor B."/>
            <person name="Wolfe K.H."/>
            <person name="Zollner A."/>
            <person name="Zumstein E."/>
            <person name="Kleine K."/>
        </authorList>
    </citation>
    <scope>NUCLEOTIDE SEQUENCE [LARGE SCALE GENOMIC DNA]</scope>
    <source>
        <strain>ATCC 204508 / S288c</strain>
    </source>
</reference>
<reference key="2">
    <citation type="journal article" date="2014" name="G3 (Bethesda)">
        <title>The reference genome sequence of Saccharomyces cerevisiae: Then and now.</title>
        <authorList>
            <person name="Engel S.R."/>
            <person name="Dietrich F.S."/>
            <person name="Fisk D.G."/>
            <person name="Binkley G."/>
            <person name="Balakrishnan R."/>
            <person name="Costanzo M.C."/>
            <person name="Dwight S.S."/>
            <person name="Hitz B.C."/>
            <person name="Karra K."/>
            <person name="Nash R.S."/>
            <person name="Weng S."/>
            <person name="Wong E.D."/>
            <person name="Lloyd P."/>
            <person name="Skrzypek M.S."/>
            <person name="Miyasato S.R."/>
            <person name="Simison M."/>
            <person name="Cherry J.M."/>
        </authorList>
    </citation>
    <scope>GENOME REANNOTATION</scope>
    <source>
        <strain>ATCC 204508 / S288c</strain>
    </source>
</reference>
<reference key="3">
    <citation type="journal article" date="2007" name="Genome Res.">
        <title>Approaching a complete repository of sequence-verified protein-encoding clones for Saccharomyces cerevisiae.</title>
        <authorList>
            <person name="Hu Y."/>
            <person name="Rolfs A."/>
            <person name="Bhullar B."/>
            <person name="Murthy T.V.S."/>
            <person name="Zhu C."/>
            <person name="Berger M.F."/>
            <person name="Camargo A.A."/>
            <person name="Kelley F."/>
            <person name="McCarron S."/>
            <person name="Jepson D."/>
            <person name="Richardson A."/>
            <person name="Raphael J."/>
            <person name="Moreira D."/>
            <person name="Taycher E."/>
            <person name="Zuo D."/>
            <person name="Mohr S."/>
            <person name="Kane M.F."/>
            <person name="Williamson J."/>
            <person name="Simpson A.J.G."/>
            <person name="Bulyk M.L."/>
            <person name="Harlow E."/>
            <person name="Marsischky G."/>
            <person name="Kolodner R.D."/>
            <person name="LaBaer J."/>
        </authorList>
    </citation>
    <scope>NUCLEOTIDE SEQUENCE [GENOMIC DNA]</scope>
    <source>
        <strain>ATCC 204508 / S288c</strain>
    </source>
</reference>
<protein>
    <recommendedName>
        <fullName>Putative uncharacterized protein YOL014W</fullName>
    </recommendedName>
</protein>
<proteinExistence type="predicted"/>
<accession>Q08110</accession>
<accession>D6W252</accession>
<dbReference type="EMBL" id="Z74756">
    <property type="protein sequence ID" value="CAA99013.1"/>
    <property type="molecule type" value="Genomic_DNA"/>
</dbReference>
<dbReference type="EMBL" id="AY557999">
    <property type="protein sequence ID" value="AAS56325.1"/>
    <property type="molecule type" value="Genomic_DNA"/>
</dbReference>
<dbReference type="EMBL" id="BK006948">
    <property type="protein sequence ID" value="DAA10768.1"/>
    <property type="molecule type" value="Genomic_DNA"/>
</dbReference>
<dbReference type="PIR" id="S66696">
    <property type="entry name" value="S66696"/>
</dbReference>
<dbReference type="RefSeq" id="NP_014628.1">
    <property type="nucleotide sequence ID" value="NM_001183268.1"/>
</dbReference>
<dbReference type="BioGRID" id="34389">
    <property type="interactions" value="35"/>
</dbReference>
<dbReference type="DIP" id="DIP-4238N"/>
<dbReference type="FunCoup" id="Q08110">
    <property type="interactions" value="54"/>
</dbReference>
<dbReference type="IntAct" id="Q08110">
    <property type="interactions" value="1"/>
</dbReference>
<dbReference type="STRING" id="4932.YOL014W"/>
<dbReference type="PaxDb" id="4932-YOL014W"/>
<dbReference type="EnsemblFungi" id="YOL014W_mRNA">
    <property type="protein sequence ID" value="YOL014W"/>
    <property type="gene ID" value="YOL014W"/>
</dbReference>
<dbReference type="GeneID" id="854146"/>
<dbReference type="KEGG" id="sce:YOL014W"/>
<dbReference type="AGR" id="SGD:S000005374"/>
<dbReference type="SGD" id="S000005374">
    <property type="gene designation" value="YOL014W"/>
</dbReference>
<dbReference type="VEuPathDB" id="FungiDB:YOL014W"/>
<dbReference type="HOGENOM" id="CLU_145591_0_0_1"/>
<dbReference type="InParanoid" id="Q08110"/>
<dbReference type="OMA" id="GRTYARX"/>
<dbReference type="OrthoDB" id="4065846at2759"/>
<dbReference type="BioCyc" id="YEAST:G3O-33430-MONOMER"/>
<dbReference type="BioGRID-ORCS" id="854146">
    <property type="hits" value="0 hits in 10 CRISPR screens"/>
</dbReference>
<dbReference type="PRO" id="PR:Q08110"/>
<dbReference type="Proteomes" id="UP000002311">
    <property type="component" value="Chromosome XV"/>
</dbReference>
<dbReference type="RNAct" id="Q08110">
    <property type="molecule type" value="protein"/>
</dbReference>
<organism>
    <name type="scientific">Saccharomyces cerevisiae (strain ATCC 204508 / S288c)</name>
    <name type="common">Baker's yeast</name>
    <dbReference type="NCBI Taxonomy" id="559292"/>
    <lineage>
        <taxon>Eukaryota</taxon>
        <taxon>Fungi</taxon>
        <taxon>Dikarya</taxon>
        <taxon>Ascomycota</taxon>
        <taxon>Saccharomycotina</taxon>
        <taxon>Saccharomycetes</taxon>
        <taxon>Saccharomycetales</taxon>
        <taxon>Saccharomycetaceae</taxon>
        <taxon>Saccharomyces</taxon>
    </lineage>
</organism>